<comment type="function">
    <text evidence="1">NDH-1 shuttles electrons from NADH, via FMN and iron-sulfur (Fe-S) centers, to quinones in the respiratory chain. The immediate electron acceptor for the enzyme in this species is believed to be ubiquinone. Couples the redox reaction to proton translocation (for every two electrons transferred, four hydrogen ions are translocated across the cytoplasmic membrane), and thus conserves the redox energy in a proton gradient.</text>
</comment>
<comment type="catalytic activity">
    <reaction evidence="1">
        <text>a quinone + NADH + 5 H(+)(in) = a quinol + NAD(+) + 4 H(+)(out)</text>
        <dbReference type="Rhea" id="RHEA:57888"/>
        <dbReference type="ChEBI" id="CHEBI:15378"/>
        <dbReference type="ChEBI" id="CHEBI:24646"/>
        <dbReference type="ChEBI" id="CHEBI:57540"/>
        <dbReference type="ChEBI" id="CHEBI:57945"/>
        <dbReference type="ChEBI" id="CHEBI:132124"/>
    </reaction>
</comment>
<comment type="subunit">
    <text evidence="1">NDH-1 is composed of 14 different subunits. Subunits NuoB, C, D, E, F, and G constitute the peripheral sector of the complex.</text>
</comment>
<comment type="subcellular location">
    <subcellularLocation>
        <location evidence="1">Cell inner membrane</location>
        <topology evidence="1">Peripheral membrane protein</topology>
        <orientation evidence="1">Cytoplasmic side</orientation>
    </subcellularLocation>
</comment>
<comment type="similarity">
    <text evidence="1">Belongs to the complex I 30 kDa subunit family.</text>
</comment>
<sequence length="227" mass="26308">MAEKQTLIDAINDRFNSQIEAVVAGVDMVTIELLPTHLLEVCTALRDDPPFNFELLLDVCGVDYLEYGMSPWRTEETPNTGFSRGFEEVIQEQIIPWNKPRFAVVYHLLSLRHNHRIRLKTYVEGDPPLVPSVIKIWSSADWYEREAFDLYGIVFEGHPDLRRLLTDYGFVGHPFRKDFPLIGEVELRYDAAQQRCVYEPVSIQPRVLVPKVIRVDSRYEKGEKENG</sequence>
<protein>
    <recommendedName>
        <fullName evidence="1">NADH-quinone oxidoreductase subunit C</fullName>
        <ecNumber evidence="1">7.1.1.-</ecNumber>
    </recommendedName>
    <alternativeName>
        <fullName evidence="1">NADH dehydrogenase I subunit C</fullName>
    </alternativeName>
    <alternativeName>
        <fullName evidence="1">NDH-1 subunit C</fullName>
    </alternativeName>
</protein>
<gene>
    <name evidence="1" type="primary">nuoC</name>
    <name type="ordered locus">CBU_1446</name>
</gene>
<accession>Q83BQ7</accession>
<feature type="chain" id="PRO_0000358084" description="NADH-quinone oxidoreductase subunit C">
    <location>
        <begin position="1"/>
        <end position="227"/>
    </location>
</feature>
<proteinExistence type="inferred from homology"/>
<name>NUOC_COXBU</name>
<reference key="1">
    <citation type="journal article" date="2003" name="Proc. Natl. Acad. Sci. U.S.A.">
        <title>Complete genome sequence of the Q-fever pathogen, Coxiella burnetii.</title>
        <authorList>
            <person name="Seshadri R."/>
            <person name="Paulsen I.T."/>
            <person name="Eisen J.A."/>
            <person name="Read T.D."/>
            <person name="Nelson K.E."/>
            <person name="Nelson W.C."/>
            <person name="Ward N.L."/>
            <person name="Tettelin H."/>
            <person name="Davidsen T.M."/>
            <person name="Beanan M.J."/>
            <person name="DeBoy R.T."/>
            <person name="Daugherty S.C."/>
            <person name="Brinkac L.M."/>
            <person name="Madupu R."/>
            <person name="Dodson R.J."/>
            <person name="Khouri H.M."/>
            <person name="Lee K.H."/>
            <person name="Carty H.A."/>
            <person name="Scanlan D."/>
            <person name="Heinzen R.A."/>
            <person name="Thompson H.A."/>
            <person name="Samuel J.E."/>
            <person name="Fraser C.M."/>
            <person name="Heidelberg J.F."/>
        </authorList>
    </citation>
    <scope>NUCLEOTIDE SEQUENCE [LARGE SCALE GENOMIC DNA]</scope>
    <source>
        <strain>RSA 493 / Nine Mile phase I</strain>
    </source>
</reference>
<dbReference type="EC" id="7.1.1.-" evidence="1"/>
<dbReference type="EMBL" id="AE016828">
    <property type="protein sequence ID" value="AAO90943.1"/>
    <property type="molecule type" value="Genomic_DNA"/>
</dbReference>
<dbReference type="RefSeq" id="NP_820429.1">
    <property type="nucleotide sequence ID" value="NC_002971.4"/>
</dbReference>
<dbReference type="RefSeq" id="WP_010958234.1">
    <property type="nucleotide sequence ID" value="NC_002971.4"/>
</dbReference>
<dbReference type="SMR" id="Q83BQ7"/>
<dbReference type="STRING" id="227377.CBU_1446"/>
<dbReference type="EnsemblBacteria" id="AAO90943">
    <property type="protein sequence ID" value="AAO90943"/>
    <property type="gene ID" value="CBU_1446"/>
</dbReference>
<dbReference type="GeneID" id="1209353"/>
<dbReference type="KEGG" id="cbu:CBU_1446"/>
<dbReference type="PATRIC" id="fig|227377.7.peg.1446"/>
<dbReference type="eggNOG" id="COG0852">
    <property type="taxonomic scope" value="Bacteria"/>
</dbReference>
<dbReference type="HOGENOM" id="CLU_042628_2_1_6"/>
<dbReference type="OrthoDB" id="9803286at2"/>
<dbReference type="Proteomes" id="UP000002671">
    <property type="component" value="Chromosome"/>
</dbReference>
<dbReference type="GO" id="GO:0005886">
    <property type="term" value="C:plasma membrane"/>
    <property type="evidence" value="ECO:0007669"/>
    <property type="project" value="UniProtKB-SubCell"/>
</dbReference>
<dbReference type="GO" id="GO:0008137">
    <property type="term" value="F:NADH dehydrogenase (ubiquinone) activity"/>
    <property type="evidence" value="ECO:0007669"/>
    <property type="project" value="InterPro"/>
</dbReference>
<dbReference type="GO" id="GO:0050136">
    <property type="term" value="F:NADH:ubiquinone reductase (non-electrogenic) activity"/>
    <property type="evidence" value="ECO:0007669"/>
    <property type="project" value="UniProtKB-UniRule"/>
</dbReference>
<dbReference type="GO" id="GO:0048038">
    <property type="term" value="F:quinone binding"/>
    <property type="evidence" value="ECO:0007669"/>
    <property type="project" value="UniProtKB-KW"/>
</dbReference>
<dbReference type="FunFam" id="3.30.460.80:FF:000006">
    <property type="entry name" value="NADH-quinone oxidoreductase subunit C"/>
    <property type="match status" value="1"/>
</dbReference>
<dbReference type="Gene3D" id="3.30.460.80">
    <property type="entry name" value="NADH:ubiquinone oxidoreductase, 30kDa subunit"/>
    <property type="match status" value="1"/>
</dbReference>
<dbReference type="HAMAP" id="MF_01357">
    <property type="entry name" value="NDH1_NuoC"/>
    <property type="match status" value="1"/>
</dbReference>
<dbReference type="InterPro" id="IPR010218">
    <property type="entry name" value="NADH_DH_suC"/>
</dbReference>
<dbReference type="InterPro" id="IPR037232">
    <property type="entry name" value="NADH_quin_OxRdtase_su_C/D-like"/>
</dbReference>
<dbReference type="InterPro" id="IPR001268">
    <property type="entry name" value="NADH_UbQ_OxRdtase_30kDa_su"/>
</dbReference>
<dbReference type="InterPro" id="IPR020396">
    <property type="entry name" value="NADH_UbQ_OxRdtase_CS"/>
</dbReference>
<dbReference type="NCBIfam" id="TIGR01961">
    <property type="entry name" value="NuoC_fam"/>
    <property type="match status" value="1"/>
</dbReference>
<dbReference type="NCBIfam" id="NF004730">
    <property type="entry name" value="PRK06074.1-1"/>
    <property type="match status" value="1"/>
</dbReference>
<dbReference type="PANTHER" id="PTHR10884:SF14">
    <property type="entry name" value="NADH DEHYDROGENASE [UBIQUINONE] IRON-SULFUR PROTEIN 3, MITOCHONDRIAL"/>
    <property type="match status" value="1"/>
</dbReference>
<dbReference type="PANTHER" id="PTHR10884">
    <property type="entry name" value="NADH DEHYDROGENASE UBIQUINONE IRON-SULFUR PROTEIN 3"/>
    <property type="match status" value="1"/>
</dbReference>
<dbReference type="Pfam" id="PF00329">
    <property type="entry name" value="Complex1_30kDa"/>
    <property type="match status" value="1"/>
</dbReference>
<dbReference type="SUPFAM" id="SSF143243">
    <property type="entry name" value="Nqo5-like"/>
    <property type="match status" value="1"/>
</dbReference>
<dbReference type="PROSITE" id="PS00542">
    <property type="entry name" value="COMPLEX1_30K"/>
    <property type="match status" value="1"/>
</dbReference>
<keyword id="KW-0997">Cell inner membrane</keyword>
<keyword id="KW-1003">Cell membrane</keyword>
<keyword id="KW-0472">Membrane</keyword>
<keyword id="KW-0520">NAD</keyword>
<keyword id="KW-0874">Quinone</keyword>
<keyword id="KW-1185">Reference proteome</keyword>
<keyword id="KW-1278">Translocase</keyword>
<keyword id="KW-0813">Transport</keyword>
<keyword id="KW-0830">Ubiquinone</keyword>
<evidence type="ECO:0000255" key="1">
    <source>
        <dbReference type="HAMAP-Rule" id="MF_01357"/>
    </source>
</evidence>
<organism>
    <name type="scientific">Coxiella burnetii (strain RSA 493 / Nine Mile phase I)</name>
    <dbReference type="NCBI Taxonomy" id="227377"/>
    <lineage>
        <taxon>Bacteria</taxon>
        <taxon>Pseudomonadati</taxon>
        <taxon>Pseudomonadota</taxon>
        <taxon>Gammaproteobacteria</taxon>
        <taxon>Legionellales</taxon>
        <taxon>Coxiellaceae</taxon>
        <taxon>Coxiella</taxon>
    </lineage>
</organism>